<keyword id="KW-1185">Reference proteome</keyword>
<keyword id="KW-0687">Ribonucleoprotein</keyword>
<keyword id="KW-0689">Ribosomal protein</keyword>
<proteinExistence type="inferred from homology"/>
<name>RS2_KORCO</name>
<feature type="chain" id="PRO_0000352058" description="Small ribosomal subunit protein uS2">
    <location>
        <begin position="1"/>
        <end position="217"/>
    </location>
</feature>
<protein>
    <recommendedName>
        <fullName evidence="1">Small ribosomal subunit protein uS2</fullName>
    </recommendedName>
    <alternativeName>
        <fullName evidence="2">30S ribosomal protein S2</fullName>
    </alternativeName>
</protein>
<dbReference type="EMBL" id="CP000968">
    <property type="protein sequence ID" value="ACB07760.1"/>
    <property type="molecule type" value="Genomic_DNA"/>
</dbReference>
<dbReference type="RefSeq" id="WP_012309657.1">
    <property type="nucleotide sequence ID" value="NC_010482.1"/>
</dbReference>
<dbReference type="SMR" id="B1L5N1"/>
<dbReference type="FunCoup" id="B1L5N1">
    <property type="interactions" value="129"/>
</dbReference>
<dbReference type="STRING" id="374847.Kcr_1014"/>
<dbReference type="EnsemblBacteria" id="ACB07760">
    <property type="protein sequence ID" value="ACB07760"/>
    <property type="gene ID" value="Kcr_1014"/>
</dbReference>
<dbReference type="GeneID" id="6094291"/>
<dbReference type="KEGG" id="kcr:Kcr_1014"/>
<dbReference type="eggNOG" id="arCOG04245">
    <property type="taxonomic scope" value="Archaea"/>
</dbReference>
<dbReference type="HOGENOM" id="CLU_058171_3_0_2"/>
<dbReference type="InParanoid" id="B1L5N1"/>
<dbReference type="OrthoDB" id="371797at2157"/>
<dbReference type="PhylomeDB" id="B1L5N1"/>
<dbReference type="Proteomes" id="UP000001686">
    <property type="component" value="Chromosome"/>
</dbReference>
<dbReference type="GO" id="GO:0022627">
    <property type="term" value="C:cytosolic small ribosomal subunit"/>
    <property type="evidence" value="ECO:0000318"/>
    <property type="project" value="GO_Central"/>
</dbReference>
<dbReference type="GO" id="GO:0003735">
    <property type="term" value="F:structural constituent of ribosome"/>
    <property type="evidence" value="ECO:0000318"/>
    <property type="project" value="GO_Central"/>
</dbReference>
<dbReference type="GO" id="GO:0000028">
    <property type="term" value="P:ribosomal small subunit assembly"/>
    <property type="evidence" value="ECO:0000318"/>
    <property type="project" value="GO_Central"/>
</dbReference>
<dbReference type="GO" id="GO:0006412">
    <property type="term" value="P:translation"/>
    <property type="evidence" value="ECO:0000318"/>
    <property type="project" value="GO_Central"/>
</dbReference>
<dbReference type="FunFam" id="3.40.50.10490:FF:000030">
    <property type="entry name" value="30S ribosomal protein S2"/>
    <property type="match status" value="1"/>
</dbReference>
<dbReference type="Gene3D" id="3.40.50.10490">
    <property type="entry name" value="Glucose-6-phosphate isomerase like protein, domain 1"/>
    <property type="match status" value="1"/>
</dbReference>
<dbReference type="HAMAP" id="MF_00291_A">
    <property type="entry name" value="Ribosomal_uS2_A"/>
    <property type="match status" value="1"/>
</dbReference>
<dbReference type="InterPro" id="IPR001865">
    <property type="entry name" value="Ribosomal_uS2"/>
</dbReference>
<dbReference type="InterPro" id="IPR023454">
    <property type="entry name" value="Ribosomal_uS2_arc"/>
</dbReference>
<dbReference type="InterPro" id="IPR005707">
    <property type="entry name" value="Ribosomal_uS2_euk/arc"/>
</dbReference>
<dbReference type="InterPro" id="IPR023591">
    <property type="entry name" value="Ribosomal_uS2_flav_dom_sf"/>
</dbReference>
<dbReference type="NCBIfam" id="TIGR01012">
    <property type="entry name" value="uS2_euk_arch"/>
    <property type="match status" value="1"/>
</dbReference>
<dbReference type="PANTHER" id="PTHR11489">
    <property type="entry name" value="40S RIBOSOMAL PROTEIN SA"/>
    <property type="match status" value="1"/>
</dbReference>
<dbReference type="Pfam" id="PF00318">
    <property type="entry name" value="Ribosomal_S2"/>
    <property type="match status" value="2"/>
</dbReference>
<dbReference type="PRINTS" id="PR00395">
    <property type="entry name" value="RIBOSOMALS2"/>
</dbReference>
<dbReference type="SUPFAM" id="SSF52313">
    <property type="entry name" value="Ribosomal protein S2"/>
    <property type="match status" value="1"/>
</dbReference>
<reference key="1">
    <citation type="journal article" date="2008" name="Proc. Natl. Acad. Sci. U.S.A.">
        <title>A korarchaeal genome reveals new insights into the evolution of the Archaea.</title>
        <authorList>
            <person name="Elkins J.G."/>
            <person name="Podar M."/>
            <person name="Graham D.E."/>
            <person name="Makarova K.S."/>
            <person name="Wolf Y."/>
            <person name="Randau L."/>
            <person name="Hedlund B.P."/>
            <person name="Brochier-Armanet C."/>
            <person name="Kunin V."/>
            <person name="Anderson I."/>
            <person name="Lapidus A."/>
            <person name="Goltsman E."/>
            <person name="Barry K."/>
            <person name="Koonin E.V."/>
            <person name="Hugenholtz P."/>
            <person name="Kyrpides N."/>
            <person name="Wanner G."/>
            <person name="Richardson P."/>
            <person name="Keller M."/>
            <person name="Stetter K.O."/>
        </authorList>
    </citation>
    <scope>NUCLEOTIDE SEQUENCE [LARGE SCALE GENOMIC DNA]</scope>
    <source>
        <strain>OPF8</strain>
    </source>
</reference>
<accession>B1L5N1</accession>
<organism>
    <name type="scientific">Korarchaeum cryptofilum (strain OPF8)</name>
    <dbReference type="NCBI Taxonomy" id="374847"/>
    <lineage>
        <taxon>Archaea</taxon>
        <taxon>Thermoproteota</taxon>
        <taxon>Candidatus Korarchaeia</taxon>
        <taxon>Candidatus Korarchaeales</taxon>
        <taxon>Candidatus Korarchaeaceae</taxon>
        <taxon>Candidatus Korarchaeum</taxon>
    </lineage>
</organism>
<comment type="similarity">
    <text evidence="1">Belongs to the universal ribosomal protein uS2 family.</text>
</comment>
<gene>
    <name evidence="1" type="primary">rps2</name>
    <name type="ordered locus">Kcr_1014</name>
</gene>
<evidence type="ECO:0000255" key="1">
    <source>
        <dbReference type="HAMAP-Rule" id="MF_00291"/>
    </source>
</evidence>
<evidence type="ECO:0000305" key="2"/>
<sequence>MGYDDTSLANVPPVEDKDLLIPRQKYLLSGVHVGTGIRTKDMEKFIYRVRPDGLCIIDIRKIDERIRTAGKFLARFDPDRVLAVSARIYGFKPVRKFAEYTGAMYITGRILPGTLTNPQAPLHLEPDVVLLSDPRVDRQIHIESVRMGIPVVALVDADNMLENIDLAIPVNNKGRRSLALVYWLLTREVLRNRKVIPPDGDLPEGYEEFATRIMGVR</sequence>